<evidence type="ECO:0000250" key="1">
    <source>
        <dbReference type="UniProtKB" id="O57286"/>
    </source>
</evidence>
<evidence type="ECO:0000250" key="2">
    <source>
        <dbReference type="UniProtKB" id="O89339"/>
    </source>
</evidence>
<evidence type="ECO:0000250" key="3">
    <source>
        <dbReference type="UniProtKB" id="P06159"/>
    </source>
</evidence>
<evidence type="ECO:0000250" key="4">
    <source>
        <dbReference type="UniProtKB" id="Q07097"/>
    </source>
</evidence>
<evidence type="ECO:0000256" key="5">
    <source>
        <dbReference type="SAM" id="MobiDB-lite"/>
    </source>
</evidence>
<evidence type="ECO:0000305" key="6"/>
<sequence>MSSVLAAYEQFLQTTEDRGFGDQQFVQSDTLKAEIPVFVLNTNDPQQRFTLMNFCLRQAVSSSAKSAIKQGALLSLLSLQATSMQNHLMIAARAPDAALRIIEVDAIDPPDYTLTINPRSGWDDIKIRAYRALSRDLPISLADRTVFVSRDAEHAVCDDMDTYLNRIFSVLIQVWIMVCKCMTAYDQPTGSEERRLAKYKQQGRMLERYQLQTDARKIIQLVIRESMVIRQFLVQEMLTADKVGAYTNRYYAMVGDIAKYIANVGMSAFFLTLKFGLGNRWKPLALAAFSGELVKLKSLMSLYRRLGDRSRYLALLESPELMEFAPANYPLLFSYAMGVGSVQDPLIRNYQFGRNFLNTSYFQYGVETAMKHQGTVDPKFASELGITDEDRVDIMQSVEKHISGKAGDDISQPRSAFTMSLNRSAFITNNNPQDLSGARLSNYEQGWSGIDQDETRDTLPESTMHRFQNIDSTNSDHNELQMPEFENDINPFNHPRFTARAPLIPEISHQTPTIRMNRNVNIRDSTRDDRQDANEDRSSNIPDDILGDLDN</sequence>
<organism>
    <name type="scientific">Human parainfluenza 4a virus (strain Toshiba)</name>
    <name type="common">HPIV-4a</name>
    <dbReference type="NCBI Taxonomy" id="11225"/>
    <lineage>
        <taxon>Viruses</taxon>
        <taxon>Riboviria</taxon>
        <taxon>Orthornavirae</taxon>
        <taxon>Negarnaviricota</taxon>
        <taxon>Haploviricotina</taxon>
        <taxon>Monjiviricetes</taxon>
        <taxon>Mononegavirales</taxon>
        <taxon>Paramyxoviridae</taxon>
        <taxon>Rubulavirinae</taxon>
        <taxon>Orthorubulavirus</taxon>
        <taxon>Orthorubulavirus hominis</taxon>
        <taxon>Human orthorubulavirus 4</taxon>
    </lineage>
</organism>
<dbReference type="EMBL" id="M32982">
    <property type="protein sequence ID" value="AAA46801.1"/>
    <property type="molecule type" value="mRNA"/>
</dbReference>
<dbReference type="PIR" id="A33772">
    <property type="entry name" value="VHNZ4A"/>
</dbReference>
<dbReference type="RefSeq" id="YP_008378659.1">
    <property type="nucleotide sequence ID" value="NC_021928.1"/>
</dbReference>
<dbReference type="SMR" id="P17240"/>
<dbReference type="DNASU" id="16488737"/>
<dbReference type="GeneID" id="16488737"/>
<dbReference type="KEGG" id="vg:16488737"/>
<dbReference type="GO" id="GO:0019029">
    <property type="term" value="C:helical viral capsid"/>
    <property type="evidence" value="ECO:0007669"/>
    <property type="project" value="UniProtKB-KW"/>
</dbReference>
<dbReference type="GO" id="GO:0030430">
    <property type="term" value="C:host cell cytoplasm"/>
    <property type="evidence" value="ECO:0007669"/>
    <property type="project" value="UniProtKB-SubCell"/>
</dbReference>
<dbReference type="GO" id="GO:1990904">
    <property type="term" value="C:ribonucleoprotein complex"/>
    <property type="evidence" value="ECO:0007669"/>
    <property type="project" value="UniProtKB-KW"/>
</dbReference>
<dbReference type="GO" id="GO:0019013">
    <property type="term" value="C:viral nucleocapsid"/>
    <property type="evidence" value="ECO:0007669"/>
    <property type="project" value="UniProtKB-KW"/>
</dbReference>
<dbReference type="GO" id="GO:0003723">
    <property type="term" value="F:RNA binding"/>
    <property type="evidence" value="ECO:0007669"/>
    <property type="project" value="UniProtKB-KW"/>
</dbReference>
<dbReference type="GO" id="GO:0005198">
    <property type="term" value="F:structural molecule activity"/>
    <property type="evidence" value="ECO:0007669"/>
    <property type="project" value="InterPro"/>
</dbReference>
<dbReference type="InterPro" id="IPR002021">
    <property type="entry name" value="Paramyx_ncap"/>
</dbReference>
<dbReference type="Pfam" id="PF00973">
    <property type="entry name" value="Paramyxo_ncap"/>
    <property type="match status" value="1"/>
</dbReference>
<keyword id="KW-0167">Capsid protein</keyword>
<keyword id="KW-1139">Helical capsid protein</keyword>
<keyword id="KW-1035">Host cytoplasm</keyword>
<keyword id="KW-0687">Ribonucleoprotein</keyword>
<keyword id="KW-0694">RNA-binding</keyword>
<keyword id="KW-0543">Viral nucleoprotein</keyword>
<keyword id="KW-0946">Virion</keyword>
<reference key="1">
    <citation type="journal article" date="1990" name="Virology">
        <title>Sequencing analyses and comparison of parainfluenza virus type 4A and 4B NP protein genes.</title>
        <authorList>
            <person name="Kondo K."/>
            <person name="Bando H."/>
            <person name="Kawano M."/>
            <person name="Tsurudome M."/>
            <person name="Komada H."/>
            <person name="Nishio M."/>
            <person name="Ito Y."/>
        </authorList>
    </citation>
    <scope>NUCLEOTIDE SEQUENCE [MRNA]</scope>
</reference>
<protein>
    <recommendedName>
        <fullName>Nucleoprotein</fullName>
    </recommendedName>
    <alternativeName>
        <fullName>Nucleocapsid protein</fullName>
        <shortName>NP</shortName>
        <shortName>Protein N</shortName>
    </alternativeName>
</protein>
<name>NCAP_PI4HA</name>
<accession>P17240</accession>
<organismHost>
    <name type="scientific">Homo sapiens</name>
    <name type="common">Human</name>
    <dbReference type="NCBI Taxonomy" id="9606"/>
</organismHost>
<feature type="chain" id="PRO_0000142668" description="Nucleoprotein">
    <location>
        <begin position="1"/>
        <end position="551"/>
    </location>
</feature>
<feature type="region of interest" description="Ncore" evidence="3">
    <location>
        <begin position="1"/>
        <end position="404"/>
    </location>
</feature>
<feature type="region of interest" description="Ntail" evidence="3">
    <location>
        <begin position="405"/>
        <end position="551"/>
    </location>
</feature>
<feature type="region of interest" description="Disordered" evidence="5">
    <location>
        <begin position="508"/>
        <end position="551"/>
    </location>
</feature>
<feature type="compositionally biased region" description="Polar residues" evidence="5">
    <location>
        <begin position="508"/>
        <end position="523"/>
    </location>
</feature>
<feature type="compositionally biased region" description="Basic and acidic residues" evidence="5">
    <location>
        <begin position="524"/>
        <end position="538"/>
    </location>
</feature>
<feature type="binding site" evidence="1">
    <location>
        <position position="180"/>
    </location>
    <ligand>
        <name>RNA</name>
        <dbReference type="ChEBI" id="CHEBI:33697"/>
    </ligand>
</feature>
<feature type="binding site" evidence="1">
    <location>
        <position position="195"/>
    </location>
    <ligand>
        <name>RNA</name>
        <dbReference type="ChEBI" id="CHEBI:33697"/>
    </ligand>
</feature>
<feature type="binding site" evidence="1">
    <location>
        <position position="260"/>
    </location>
    <ligand>
        <name>RNA</name>
        <dbReference type="ChEBI" id="CHEBI:33697"/>
    </ligand>
</feature>
<feature type="binding site" evidence="1">
    <location>
        <position position="350"/>
    </location>
    <ligand>
        <name>RNA</name>
        <dbReference type="ChEBI" id="CHEBI:33697"/>
    </ligand>
</feature>
<feature type="binding site" evidence="1">
    <location>
        <position position="354"/>
    </location>
    <ligand>
        <name>RNA</name>
        <dbReference type="ChEBI" id="CHEBI:33697"/>
    </ligand>
</feature>
<proteinExistence type="evidence at transcript level"/>
<comment type="function">
    <text evidence="2 3">Forms the helical nucleocapsid (NC), protecting the genome from nucleases (By similarity). The encapsidated genomic RNA serves as template for transcription and replication; encapsidation by N is coupled to RNA synthesis. Forms the encapsidation complex with the phosphoprotein protein P. Before encapsidation, the newly synthesized free N protein, so-called N0, is chaperoned by P (By similarity).</text>
</comment>
<comment type="subunit">
    <text evidence="1 3 4">Homomultimer; forms the nucleocapsid (By similarity). Binds to the viral genomic RNA (By similarity). N0 interacts with the phosphoprotein (via N-terminus); this interaction allows P to chaperon N0 to avoid N polymerization before encapsidation. Interacts as N-RNA template with the phosphoprotein (via C-terminus); this interaction positions the polymerase on the template (By similarity).</text>
</comment>
<comment type="subcellular location">
    <subcellularLocation>
        <location evidence="6">Virion</location>
    </subcellularLocation>
    <subcellularLocation>
        <location>Host cytoplasm</location>
    </subcellularLocation>
</comment>
<comment type="domain">
    <text evidence="3">Ncore is globular and carries the regions required for self-assembly and RNA-binding. Ntail is an intrinsically disordered monomeric domain in the C-terminus.</text>
</comment>
<comment type="similarity">
    <text evidence="6">Belongs to the paramyxoviruses nucleocapsid family.</text>
</comment>
<gene>
    <name type="primary">N</name>
    <name type="synonym">NP</name>
</gene>